<comment type="similarity">
    <text evidence="1">Belongs to the UPF0434 family.</text>
</comment>
<evidence type="ECO:0000255" key="1">
    <source>
        <dbReference type="HAMAP-Rule" id="MF_01187"/>
    </source>
</evidence>
<sequence length="68" mass="7409">MDARLLEILVCPICKGPLHYDRGAQELVCHADKLAYPIRDGIPVMLVDEARQTVEGTPVDPAGPARGR</sequence>
<organism>
    <name type="scientific">Burkholderia mallei (strain SAVP1)</name>
    <dbReference type="NCBI Taxonomy" id="320388"/>
    <lineage>
        <taxon>Bacteria</taxon>
        <taxon>Pseudomonadati</taxon>
        <taxon>Pseudomonadota</taxon>
        <taxon>Betaproteobacteria</taxon>
        <taxon>Burkholderiales</taxon>
        <taxon>Burkholderiaceae</taxon>
        <taxon>Burkholderia</taxon>
        <taxon>pseudomallei group</taxon>
    </lineage>
</organism>
<proteinExistence type="inferred from homology"/>
<name>Y2370_BURMS</name>
<dbReference type="EMBL" id="CP000526">
    <property type="protein sequence ID" value="ABM52581.1"/>
    <property type="molecule type" value="Genomic_DNA"/>
</dbReference>
<dbReference type="RefSeq" id="WP_004196455.1">
    <property type="nucleotide sequence ID" value="NC_008785.1"/>
</dbReference>
<dbReference type="SMR" id="A1V115"/>
<dbReference type="KEGG" id="bmv:BMASAVP1_A0570"/>
<dbReference type="HOGENOM" id="CLU_155659_3_0_4"/>
<dbReference type="GO" id="GO:0005829">
    <property type="term" value="C:cytosol"/>
    <property type="evidence" value="ECO:0007669"/>
    <property type="project" value="TreeGrafter"/>
</dbReference>
<dbReference type="FunFam" id="2.20.25.10:FF:000002">
    <property type="entry name" value="UPF0434 protein YcaR"/>
    <property type="match status" value="1"/>
</dbReference>
<dbReference type="Gene3D" id="2.20.25.10">
    <property type="match status" value="1"/>
</dbReference>
<dbReference type="HAMAP" id="MF_01187">
    <property type="entry name" value="UPF0434"/>
    <property type="match status" value="1"/>
</dbReference>
<dbReference type="InterPro" id="IPR005651">
    <property type="entry name" value="Trm112-like"/>
</dbReference>
<dbReference type="NCBIfam" id="TIGR01053">
    <property type="entry name" value="LSD1"/>
    <property type="match status" value="1"/>
</dbReference>
<dbReference type="PANTHER" id="PTHR33505:SF4">
    <property type="entry name" value="PROTEIN PREY, MITOCHONDRIAL"/>
    <property type="match status" value="1"/>
</dbReference>
<dbReference type="PANTHER" id="PTHR33505">
    <property type="entry name" value="ZGC:162634"/>
    <property type="match status" value="1"/>
</dbReference>
<dbReference type="Pfam" id="PF03966">
    <property type="entry name" value="Trm112p"/>
    <property type="match status" value="1"/>
</dbReference>
<dbReference type="SUPFAM" id="SSF158997">
    <property type="entry name" value="Trm112p-like"/>
    <property type="match status" value="1"/>
</dbReference>
<reference key="1">
    <citation type="journal article" date="2010" name="Genome Biol. Evol.">
        <title>Continuing evolution of Burkholderia mallei through genome reduction and large-scale rearrangements.</title>
        <authorList>
            <person name="Losada L."/>
            <person name="Ronning C.M."/>
            <person name="DeShazer D."/>
            <person name="Woods D."/>
            <person name="Fedorova N."/>
            <person name="Kim H.S."/>
            <person name="Shabalina S.A."/>
            <person name="Pearson T.R."/>
            <person name="Brinkac L."/>
            <person name="Tan P."/>
            <person name="Nandi T."/>
            <person name="Crabtree J."/>
            <person name="Badger J."/>
            <person name="Beckstrom-Sternberg S."/>
            <person name="Saqib M."/>
            <person name="Schutzer S.E."/>
            <person name="Keim P."/>
            <person name="Nierman W.C."/>
        </authorList>
    </citation>
    <scope>NUCLEOTIDE SEQUENCE [LARGE SCALE GENOMIC DNA]</scope>
    <source>
        <strain>SAVP1</strain>
    </source>
</reference>
<feature type="chain" id="PRO_1000065833" description="UPF0434 protein BMASAVP1_A0570">
    <location>
        <begin position="1"/>
        <end position="68"/>
    </location>
</feature>
<gene>
    <name type="ordered locus">BMASAVP1_A0570</name>
</gene>
<accession>A1V115</accession>
<protein>
    <recommendedName>
        <fullName evidence="1">UPF0434 protein BMASAVP1_A0570</fullName>
    </recommendedName>
</protein>